<protein>
    <recommendedName>
        <fullName>UPF0382 membrane protein SAV0583</fullName>
    </recommendedName>
</protein>
<reference key="1">
    <citation type="journal article" date="2001" name="Lancet">
        <title>Whole genome sequencing of meticillin-resistant Staphylococcus aureus.</title>
        <authorList>
            <person name="Kuroda M."/>
            <person name="Ohta T."/>
            <person name="Uchiyama I."/>
            <person name="Baba T."/>
            <person name="Yuzawa H."/>
            <person name="Kobayashi I."/>
            <person name="Cui L."/>
            <person name="Oguchi A."/>
            <person name="Aoki K."/>
            <person name="Nagai Y."/>
            <person name="Lian J.-Q."/>
            <person name="Ito T."/>
            <person name="Kanamori M."/>
            <person name="Matsumaru H."/>
            <person name="Maruyama A."/>
            <person name="Murakami H."/>
            <person name="Hosoyama A."/>
            <person name="Mizutani-Ui Y."/>
            <person name="Takahashi N.K."/>
            <person name="Sawano T."/>
            <person name="Inoue R."/>
            <person name="Kaito C."/>
            <person name="Sekimizu K."/>
            <person name="Hirakawa H."/>
            <person name="Kuhara S."/>
            <person name="Goto S."/>
            <person name="Yabuzaki J."/>
            <person name="Kanehisa M."/>
            <person name="Yamashita A."/>
            <person name="Oshima K."/>
            <person name="Furuya K."/>
            <person name="Yoshino C."/>
            <person name="Shiba T."/>
            <person name="Hattori M."/>
            <person name="Ogasawara N."/>
            <person name="Hayashi H."/>
            <person name="Hiramatsu K."/>
        </authorList>
    </citation>
    <scope>NUCLEOTIDE SEQUENCE [LARGE SCALE GENOMIC DNA]</scope>
    <source>
        <strain>Mu50 / ATCC 700699</strain>
    </source>
</reference>
<sequence>MKLFIILGALNAMMAVGTGAFGAHGLQGKISDHYLSVWEKATTYQMYHGLALLIIGVISGTTSINVNWAGWLIFAGIIFFSGSLYILVLTQIKVLGAITPIGGVLFIIGWIMLIIATFKFAG</sequence>
<accession>Q99W28</accession>
<feature type="chain" id="PRO_0000249033" description="UPF0382 membrane protein SAV0583">
    <location>
        <begin position="1"/>
        <end position="122"/>
    </location>
</feature>
<feature type="transmembrane region" description="Helical" evidence="1">
    <location>
        <begin position="3"/>
        <end position="23"/>
    </location>
</feature>
<feature type="transmembrane region" description="Helical" evidence="1">
    <location>
        <begin position="46"/>
        <end position="66"/>
    </location>
</feature>
<feature type="transmembrane region" description="Helical" evidence="1">
    <location>
        <begin position="69"/>
        <end position="89"/>
    </location>
</feature>
<feature type="transmembrane region" description="Helical" evidence="1">
    <location>
        <begin position="98"/>
        <end position="118"/>
    </location>
</feature>
<name>Y583_STAAM</name>
<gene>
    <name type="ordered locus">SAV0583</name>
</gene>
<keyword id="KW-1003">Cell membrane</keyword>
<keyword id="KW-0472">Membrane</keyword>
<keyword id="KW-0812">Transmembrane</keyword>
<keyword id="KW-1133">Transmembrane helix</keyword>
<dbReference type="EMBL" id="BA000017">
    <property type="protein sequence ID" value="BAB56745.1"/>
    <property type="molecule type" value="Genomic_DNA"/>
</dbReference>
<dbReference type="RefSeq" id="WP_000765183.1">
    <property type="nucleotide sequence ID" value="NC_002758.2"/>
</dbReference>
<dbReference type="KEGG" id="sav:SAV0583"/>
<dbReference type="HOGENOM" id="CLU_096548_3_3_9"/>
<dbReference type="PhylomeDB" id="Q99W28"/>
<dbReference type="Proteomes" id="UP000002481">
    <property type="component" value="Chromosome"/>
</dbReference>
<dbReference type="GO" id="GO:0005886">
    <property type="term" value="C:plasma membrane"/>
    <property type="evidence" value="ECO:0007669"/>
    <property type="project" value="UniProtKB-SubCell"/>
</dbReference>
<dbReference type="InterPro" id="IPR006696">
    <property type="entry name" value="DUF423"/>
</dbReference>
<dbReference type="PANTHER" id="PTHR43461">
    <property type="entry name" value="TRANSMEMBRANE PROTEIN 256"/>
    <property type="match status" value="1"/>
</dbReference>
<dbReference type="PANTHER" id="PTHR43461:SF1">
    <property type="entry name" value="TRANSMEMBRANE PROTEIN 256"/>
    <property type="match status" value="1"/>
</dbReference>
<dbReference type="Pfam" id="PF04241">
    <property type="entry name" value="DUF423"/>
    <property type="match status" value="1"/>
</dbReference>
<comment type="subcellular location">
    <subcellularLocation>
        <location evidence="2">Cell membrane</location>
        <topology evidence="2">Multi-pass membrane protein</topology>
    </subcellularLocation>
</comment>
<comment type="similarity">
    <text evidence="2">Belongs to the UPF0382 family.</text>
</comment>
<proteinExistence type="inferred from homology"/>
<organism>
    <name type="scientific">Staphylococcus aureus (strain Mu50 / ATCC 700699)</name>
    <dbReference type="NCBI Taxonomy" id="158878"/>
    <lineage>
        <taxon>Bacteria</taxon>
        <taxon>Bacillati</taxon>
        <taxon>Bacillota</taxon>
        <taxon>Bacilli</taxon>
        <taxon>Bacillales</taxon>
        <taxon>Staphylococcaceae</taxon>
        <taxon>Staphylococcus</taxon>
    </lineage>
</organism>
<evidence type="ECO:0000255" key="1"/>
<evidence type="ECO:0000305" key="2"/>